<comment type="function">
    <text>PsaA and PsaB bind P700, the primary electron donor of photosystem I (PSI), as well as the electron acceptors A0, A1 and FX. PSI is a plastocyanin/cytochrome c6-ferredoxin oxidoreductase, converting photonic excitation into a charge separation, which transfers an electron from the donor P700 chlorophyll pair to the spectroscopically characterized acceptors A0, A1, FX, FA and FB in turn. Oxidized P700 is reduced on the lumenal side of the thylakoid membrane by plastocyanin or cytochrome c6.</text>
</comment>
<comment type="catalytic activity">
    <reaction evidence="1">
        <text>reduced [plastocyanin] + hnu + oxidized [2Fe-2S]-[ferredoxin] = oxidized [plastocyanin] + reduced [2Fe-2S]-[ferredoxin]</text>
        <dbReference type="Rhea" id="RHEA:30407"/>
        <dbReference type="Rhea" id="RHEA-COMP:10000"/>
        <dbReference type="Rhea" id="RHEA-COMP:10001"/>
        <dbReference type="Rhea" id="RHEA-COMP:10039"/>
        <dbReference type="Rhea" id="RHEA-COMP:10040"/>
        <dbReference type="ChEBI" id="CHEBI:29036"/>
        <dbReference type="ChEBI" id="CHEBI:30212"/>
        <dbReference type="ChEBI" id="CHEBI:33737"/>
        <dbReference type="ChEBI" id="CHEBI:33738"/>
        <dbReference type="ChEBI" id="CHEBI:49552"/>
        <dbReference type="EC" id="1.97.1.12"/>
    </reaction>
</comment>
<comment type="cofactor">
    <text evidence="1">P700 is a chlorophyll a/chlorophyll a' dimer, A0 is one or more chlorophyll a, A1 is one or both phylloquinones and FX is a shared 4Fe-4S iron-sulfur center.</text>
</comment>
<comment type="subunit">
    <text evidence="1">The PsaA/B heterodimer binds the P700 chlorophyll special pair and subsequent electron acceptors. PSI consists of a core antenna complex that captures photons, and an electron transfer chain that converts photonic excitation into a charge separation. The eukaryotic PSI reaction center is composed of at least 11 subunits.</text>
</comment>
<comment type="subcellular location">
    <subcellularLocation>
        <location evidence="1">Plastid</location>
        <location evidence="1">Chloroplast thylakoid membrane</location>
        <topology evidence="1">Multi-pass membrane protein</topology>
    </subcellularLocation>
</comment>
<comment type="similarity">
    <text evidence="1">Belongs to the PsaA/PsaB family.</text>
</comment>
<evidence type="ECO:0000255" key="1">
    <source>
        <dbReference type="HAMAP-Rule" id="MF_00458"/>
    </source>
</evidence>
<proteinExistence type="inferred from homology"/>
<organism>
    <name type="scientific">Phaeodactylum tricornutum (strain CCAP 1055/1)</name>
    <dbReference type="NCBI Taxonomy" id="556484"/>
    <lineage>
        <taxon>Eukaryota</taxon>
        <taxon>Sar</taxon>
        <taxon>Stramenopiles</taxon>
        <taxon>Ochrophyta</taxon>
        <taxon>Bacillariophyta</taxon>
        <taxon>Bacillariophyceae</taxon>
        <taxon>Bacillariophycidae</taxon>
        <taxon>Naviculales</taxon>
        <taxon>Phaeodactylaceae</taxon>
        <taxon>Phaeodactylum</taxon>
    </lineage>
</organism>
<name>PSAA_PHATC</name>
<geneLocation type="chloroplast"/>
<feature type="chain" id="PRO_0000275971" description="Photosystem I P700 chlorophyll a apoprotein A1">
    <location>
        <begin position="1"/>
        <end position="752"/>
    </location>
</feature>
<feature type="transmembrane region" description="Helical; Name=I" evidence="1">
    <location>
        <begin position="73"/>
        <end position="96"/>
    </location>
</feature>
<feature type="transmembrane region" description="Helical; Name=II" evidence="1">
    <location>
        <begin position="159"/>
        <end position="182"/>
    </location>
</feature>
<feature type="transmembrane region" description="Helical; Name=III" evidence="1">
    <location>
        <begin position="198"/>
        <end position="222"/>
    </location>
</feature>
<feature type="transmembrane region" description="Helical; Name=IV" evidence="1">
    <location>
        <begin position="294"/>
        <end position="312"/>
    </location>
</feature>
<feature type="transmembrane region" description="Helical; Name=V" evidence="1">
    <location>
        <begin position="349"/>
        <end position="372"/>
    </location>
</feature>
<feature type="transmembrane region" description="Helical; Name=VI" evidence="1">
    <location>
        <begin position="388"/>
        <end position="414"/>
    </location>
</feature>
<feature type="transmembrane region" description="Helical; Name=VII" evidence="1">
    <location>
        <begin position="436"/>
        <end position="458"/>
    </location>
</feature>
<feature type="transmembrane region" description="Helical; Name=VIII" evidence="1">
    <location>
        <begin position="533"/>
        <end position="551"/>
    </location>
</feature>
<feature type="transmembrane region" description="Helical; Name=IX" evidence="1">
    <location>
        <begin position="591"/>
        <end position="612"/>
    </location>
</feature>
<feature type="transmembrane region" description="Helical; Name=X" evidence="1">
    <location>
        <begin position="666"/>
        <end position="688"/>
    </location>
</feature>
<feature type="transmembrane region" description="Helical; Name=XI" evidence="1">
    <location>
        <begin position="726"/>
        <end position="746"/>
    </location>
</feature>
<feature type="binding site" evidence="1">
    <location>
        <position position="575"/>
    </location>
    <ligand>
        <name>[4Fe-4S] cluster</name>
        <dbReference type="ChEBI" id="CHEBI:49883"/>
        <note>ligand shared between dimeric partners</note>
    </ligand>
</feature>
<feature type="binding site" evidence="1">
    <location>
        <position position="584"/>
    </location>
    <ligand>
        <name>[4Fe-4S] cluster</name>
        <dbReference type="ChEBI" id="CHEBI:49883"/>
        <note>ligand shared between dimeric partners</note>
    </ligand>
</feature>
<feature type="binding site" description="axial binding residue" evidence="1">
    <location>
        <position position="677"/>
    </location>
    <ligand>
        <name>chlorophyll a'</name>
        <dbReference type="ChEBI" id="CHEBI:189419"/>
        <label>A1</label>
    </ligand>
    <ligandPart>
        <name>Mg</name>
        <dbReference type="ChEBI" id="CHEBI:25107"/>
    </ligandPart>
</feature>
<feature type="binding site" description="axial binding residue" evidence="1">
    <location>
        <position position="685"/>
    </location>
    <ligand>
        <name>chlorophyll a</name>
        <dbReference type="ChEBI" id="CHEBI:58416"/>
        <label>A3</label>
    </ligand>
    <ligandPart>
        <name>Mg</name>
        <dbReference type="ChEBI" id="CHEBI:25107"/>
    </ligandPart>
</feature>
<feature type="binding site" evidence="1">
    <location>
        <position position="693"/>
    </location>
    <ligand>
        <name>chlorophyll a</name>
        <dbReference type="ChEBI" id="CHEBI:58416"/>
        <label>A3</label>
    </ligand>
</feature>
<feature type="binding site" evidence="1">
    <location>
        <position position="694"/>
    </location>
    <ligand>
        <name>phylloquinone</name>
        <dbReference type="ChEBI" id="CHEBI:18067"/>
        <label>A</label>
    </ligand>
</feature>
<keyword id="KW-0004">4Fe-4S</keyword>
<keyword id="KW-0148">Chlorophyll</keyword>
<keyword id="KW-0150">Chloroplast</keyword>
<keyword id="KW-0157">Chromophore</keyword>
<keyword id="KW-0249">Electron transport</keyword>
<keyword id="KW-0408">Iron</keyword>
<keyword id="KW-0411">Iron-sulfur</keyword>
<keyword id="KW-0460">Magnesium</keyword>
<keyword id="KW-0472">Membrane</keyword>
<keyword id="KW-0479">Metal-binding</keyword>
<keyword id="KW-0560">Oxidoreductase</keyword>
<keyword id="KW-0602">Photosynthesis</keyword>
<keyword id="KW-0603">Photosystem I</keyword>
<keyword id="KW-0934">Plastid</keyword>
<keyword id="KW-1185">Reference proteome</keyword>
<keyword id="KW-0793">Thylakoid</keyword>
<keyword id="KW-0812">Transmembrane</keyword>
<keyword id="KW-1133">Transmembrane helix</keyword>
<keyword id="KW-0813">Transport</keyword>
<dbReference type="EC" id="1.97.1.12" evidence="1"/>
<dbReference type="EMBL" id="EF067920">
    <property type="protein sequence ID" value="ABK20582.1"/>
    <property type="molecule type" value="Genomic_DNA"/>
</dbReference>
<dbReference type="RefSeq" id="YP_874359.1">
    <property type="nucleotide sequence ID" value="NC_008588.1"/>
</dbReference>
<dbReference type="SMR" id="A0T0L9"/>
<dbReference type="STRING" id="556484.A0T0L9"/>
<dbReference type="GeneID" id="4524636"/>
<dbReference type="InParanoid" id="A0T0L9"/>
<dbReference type="Proteomes" id="UP000000759">
    <property type="component" value="Chloroplast"/>
</dbReference>
<dbReference type="GO" id="GO:0009535">
    <property type="term" value="C:chloroplast thylakoid membrane"/>
    <property type="evidence" value="ECO:0007669"/>
    <property type="project" value="UniProtKB-SubCell"/>
</dbReference>
<dbReference type="GO" id="GO:0009522">
    <property type="term" value="C:photosystem I"/>
    <property type="evidence" value="ECO:0007669"/>
    <property type="project" value="UniProtKB-KW"/>
</dbReference>
<dbReference type="GO" id="GO:0051539">
    <property type="term" value="F:4 iron, 4 sulfur cluster binding"/>
    <property type="evidence" value="ECO:0007669"/>
    <property type="project" value="UniProtKB-KW"/>
</dbReference>
<dbReference type="GO" id="GO:0016168">
    <property type="term" value="F:chlorophyll binding"/>
    <property type="evidence" value="ECO:0007669"/>
    <property type="project" value="UniProtKB-KW"/>
</dbReference>
<dbReference type="GO" id="GO:0009055">
    <property type="term" value="F:electron transfer activity"/>
    <property type="evidence" value="ECO:0007669"/>
    <property type="project" value="UniProtKB-UniRule"/>
</dbReference>
<dbReference type="GO" id="GO:0000287">
    <property type="term" value="F:magnesium ion binding"/>
    <property type="evidence" value="ECO:0007669"/>
    <property type="project" value="UniProtKB-UniRule"/>
</dbReference>
<dbReference type="GO" id="GO:0016491">
    <property type="term" value="F:oxidoreductase activity"/>
    <property type="evidence" value="ECO:0007669"/>
    <property type="project" value="UniProtKB-KW"/>
</dbReference>
<dbReference type="GO" id="GO:0015979">
    <property type="term" value="P:photosynthesis"/>
    <property type="evidence" value="ECO:0007669"/>
    <property type="project" value="UniProtKB-UniRule"/>
</dbReference>
<dbReference type="Gene3D" id="1.20.1130.10">
    <property type="entry name" value="Photosystem I PsaA/PsaB"/>
    <property type="match status" value="1"/>
</dbReference>
<dbReference type="HAMAP" id="MF_00458">
    <property type="entry name" value="PSI_PsaA"/>
    <property type="match status" value="1"/>
</dbReference>
<dbReference type="InterPro" id="IPR006243">
    <property type="entry name" value="PSI_PsaA"/>
</dbReference>
<dbReference type="InterPro" id="IPR001280">
    <property type="entry name" value="PSI_PsaA/B"/>
</dbReference>
<dbReference type="InterPro" id="IPR020586">
    <property type="entry name" value="PSI_PsaA/B_CS"/>
</dbReference>
<dbReference type="InterPro" id="IPR036408">
    <property type="entry name" value="PSI_PsaA/B_sf"/>
</dbReference>
<dbReference type="NCBIfam" id="TIGR01335">
    <property type="entry name" value="psaA"/>
    <property type="match status" value="1"/>
</dbReference>
<dbReference type="PANTHER" id="PTHR30128">
    <property type="entry name" value="OUTER MEMBRANE PROTEIN, OMPA-RELATED"/>
    <property type="match status" value="1"/>
</dbReference>
<dbReference type="PANTHER" id="PTHR30128:SF19">
    <property type="entry name" value="PHOTOSYSTEM I P700 CHLOROPHYLL A APOPROTEIN A1-RELATED"/>
    <property type="match status" value="1"/>
</dbReference>
<dbReference type="Pfam" id="PF00223">
    <property type="entry name" value="PsaA_PsaB"/>
    <property type="match status" value="1"/>
</dbReference>
<dbReference type="PIRSF" id="PIRSF002905">
    <property type="entry name" value="PSI_A"/>
    <property type="match status" value="1"/>
</dbReference>
<dbReference type="PRINTS" id="PR00257">
    <property type="entry name" value="PHOTSYSPSAAB"/>
</dbReference>
<dbReference type="SUPFAM" id="SSF81558">
    <property type="entry name" value="Photosystem I subunits PsaA/PsaB"/>
    <property type="match status" value="1"/>
</dbReference>
<dbReference type="PROSITE" id="PS00419">
    <property type="entry name" value="PHOTOSYSTEM_I_PSAAB"/>
    <property type="match status" value="1"/>
</dbReference>
<accession>A0T0L9</accession>
<reference key="1">
    <citation type="journal article" date="2007" name="Mol. Genet. Genomics">
        <title>Chloroplast genomes of the diatoms Phaeodactylum tricornutum and Thalassiosira pseudonana: comparison with other plastid genomes of the red lineage.</title>
        <authorList>
            <person name="Oudot-Le Secq M.-P."/>
            <person name="Grimwood J."/>
            <person name="Shapiro H."/>
            <person name="Armbrust E.V."/>
            <person name="Bowler C."/>
            <person name="Green B.R."/>
        </authorList>
    </citation>
    <scope>NUCLEOTIDE SEQUENCE [LARGE SCALE GENOMIC DNA]</scope>
    <source>
        <strain>CCAP 1055/1</strain>
    </source>
</reference>
<sequence>MAISSTDRRSKNVQIFVEKDAVETSFAKWAQPGHFSRTLAKGPKTTTWIWNLHADAHDFDSQTSSLEEVSRKIFSAHFGQLSVIFLWISGMHFHGAYFSNYSAWLTDPVNIKQSSQVVWPIVGQEILNGDVGGNFQGIQTTSGWFQMWRAEGITSEVELYWIAIGGLAMSAIMLFAGWFHYHKAAPKLEWFQNAESMMNHHLAGLLGLGCLSWSGHQIHVALPINKLLDAGVAPQEIPLPHEFLINRELMSQLYPSFSKGLAPFFSGHWGEYSDFLTFKGGLNPVTGGLWLSDIAHHHLALAVLFIFAGHMYRTNWGIGHSMKEILEAHKGPFTGEGHKGLYEILTTSWHAQLAINLAMMGSLSIIVAHHMYAMPPYPYIATDYATQLSLFTHHMWIGGFCVTGGAAHAAIFMVRDYTPANNYNNLLDRVLRHRDSIIAHLNWVCIFLGCHAFGFYIHNDTMRALGRPQDMFSDKAIQLQPIFAQWIQNIHLLAPGTTAPNALATTSYAFGGEVVEVGGKIAMMPIQLGTADFMVHHIHAFTIHVTVLILLKGVLYARSSKLIPDKANLGFRFPCDGPGRGGTCQSSSWDHVFLGLFWMYNSISVVIFHFSWKMQSDVWGTISPDGSISHITGGNFAKGAITINGWLRDFLWSQASQVIQSYGSAASAYGLIFLGAHFIWAFSLMFLFSGRGYWQELIESIVWAHNKLNFAPAIQPRALSITQGRAVGLAHYLLGGIGTTWAFFLARAVSIS</sequence>
<protein>
    <recommendedName>
        <fullName evidence="1">Photosystem I P700 chlorophyll a apoprotein A1</fullName>
        <ecNumber evidence="1">1.97.1.12</ecNumber>
    </recommendedName>
    <alternativeName>
        <fullName evidence="1">PSI-A</fullName>
    </alternativeName>
    <alternativeName>
        <fullName evidence="1">PsaA</fullName>
    </alternativeName>
</protein>
<gene>
    <name evidence="1" type="primary">psaA</name>
</gene>